<proteinExistence type="inferred from homology"/>
<protein>
    <recommendedName>
        <fullName>Cytochrome c oxidase subunit 3</fullName>
        <ecNumber>7.1.1.9</ecNumber>
    </recommendedName>
    <alternativeName>
        <fullName>Cytochrome c oxidase polypeptide III</fullName>
    </alternativeName>
</protein>
<sequence>MTHQTHAYHMVNPSPWPLTGALSALLMTFGLIMWFHFNSTALLMLGLTTNMLTMYQWWRDIIRESTFQGHHTPVVQKGLRYGMILFIISEVLFFTGFFWAFYHSSLAPTPELGGCWPPTGIHPLNPLEVPLLNTSVLLASGVSITWAHHSLMEGHRNHMLQALFITIALGVYFTLLQASEYYEAPFTISDGVYGSTFFVATGFHGLHVIIGSTFLIVCFFRQLKFHFTSSHHFGFEAAAWYWHFVDVVWLFLYVSIYWWGS</sequence>
<organism>
    <name type="scientific">Tragelaphus oryx</name>
    <name type="common">Eland</name>
    <name type="synonym">Taurotragus oryx</name>
    <dbReference type="NCBI Taxonomy" id="9945"/>
    <lineage>
        <taxon>Eukaryota</taxon>
        <taxon>Metazoa</taxon>
        <taxon>Chordata</taxon>
        <taxon>Craniata</taxon>
        <taxon>Vertebrata</taxon>
        <taxon>Euteleostomi</taxon>
        <taxon>Mammalia</taxon>
        <taxon>Eutheria</taxon>
        <taxon>Laurasiatheria</taxon>
        <taxon>Artiodactyla</taxon>
        <taxon>Ruminantia</taxon>
        <taxon>Pecora</taxon>
        <taxon>Bovidae</taxon>
        <taxon>Bovinae</taxon>
        <taxon>Tragelaphus</taxon>
    </lineage>
</organism>
<comment type="function">
    <text evidence="2">Component of the cytochrome c oxidase, the last enzyme in the mitochondrial electron transport chain which drives oxidative phosphorylation. The respiratory chain contains 3 multisubunit complexes succinate dehydrogenase (complex II, CII), ubiquinol-cytochrome c oxidoreductase (cytochrome b-c1 complex, complex III, CIII) and cytochrome c oxidase (complex IV, CIV), that cooperate to transfer electrons derived from NADH and succinate to molecular oxygen, creating an electrochemical gradient over the inner membrane that drives transmembrane transport and the ATP synthase. Cytochrome c oxidase is the component of the respiratory chain that catalyzes the reduction of oxygen to water. Electrons originating from reduced cytochrome c in the intermembrane space (IMS) are transferred via the dinuclear copper A center (CU(A)) of subunit 2 and heme A of subunit 1 to the active site in subunit 1, a binuclear center (BNC) formed by heme A3 and copper B (CU(B)). The BNC reduces molecular oxygen to 2 water molecules using 4 electrons from cytochrome c in the IMS and 4 protons from the mitochondrial matrix.</text>
</comment>
<comment type="catalytic activity">
    <reaction evidence="2">
        <text>4 Fe(II)-[cytochrome c] + O2 + 8 H(+)(in) = 4 Fe(III)-[cytochrome c] + 2 H2O + 4 H(+)(out)</text>
        <dbReference type="Rhea" id="RHEA:11436"/>
        <dbReference type="Rhea" id="RHEA-COMP:10350"/>
        <dbReference type="Rhea" id="RHEA-COMP:14399"/>
        <dbReference type="ChEBI" id="CHEBI:15377"/>
        <dbReference type="ChEBI" id="CHEBI:15378"/>
        <dbReference type="ChEBI" id="CHEBI:15379"/>
        <dbReference type="ChEBI" id="CHEBI:29033"/>
        <dbReference type="ChEBI" id="CHEBI:29034"/>
        <dbReference type="EC" id="7.1.1.9"/>
    </reaction>
    <physiologicalReaction direction="left-to-right" evidence="2">
        <dbReference type="Rhea" id="RHEA:11437"/>
    </physiologicalReaction>
</comment>
<comment type="subunit">
    <text evidence="1">Component of the cytochrome c oxidase (complex IV, CIV), a multisubunit enzyme composed of 14 subunits. The complex is composed of a catalytic core of 3 subunits MT-CO1, MT-CO2 and MT-CO3, encoded in the mitochondrial DNA, and 11 supernumerary subunits COX4I, COX5A, COX5B, COX6A, COX6B, COX6C, COX7A, COX7B, COX7C, COX8 and NDUFA4, which are encoded in the nuclear genome. The complex exists as a monomer or a dimer and forms supercomplexes (SCs) in the inner mitochondrial membrane with NADH-ubiquinone oxidoreductase (complex I, CI) and ubiquinol-cytochrome c oxidoreductase (cytochrome b-c1 complex, complex III, CIII), resulting in different assemblies (supercomplex SCI(1)III(2)IV(1) and megacomplex MCI(2)III(2)IV(2)).</text>
</comment>
<comment type="subcellular location">
    <subcellularLocation>
        <location evidence="1">Mitochondrion inner membrane</location>
        <topology evidence="1">Multi-pass membrane protein</topology>
    </subcellularLocation>
</comment>
<comment type="similarity">
    <text evidence="3">Belongs to the cytochrome c oxidase subunit 3 family.</text>
</comment>
<keyword id="KW-0472">Membrane</keyword>
<keyword id="KW-0496">Mitochondrion</keyword>
<keyword id="KW-0999">Mitochondrion inner membrane</keyword>
<keyword id="KW-1278">Translocase</keyword>
<keyword id="KW-0812">Transmembrane</keyword>
<keyword id="KW-1133">Transmembrane helix</keyword>
<accession>O47686</accession>
<gene>
    <name type="primary">MT-CO3</name>
    <name type="synonym">COIII</name>
    <name type="synonym">COXIII</name>
    <name type="synonym">MTCO3</name>
</gene>
<geneLocation type="mitochondrion"/>
<name>COX3_TRAOR</name>
<feature type="chain" id="PRO_0000183864" description="Cytochrome c oxidase subunit 3">
    <location>
        <begin position="1"/>
        <end position="261"/>
    </location>
</feature>
<feature type="topological domain" description="Mitochondrial matrix" evidence="1">
    <location>
        <begin position="1"/>
        <end position="15"/>
    </location>
</feature>
<feature type="transmembrane region" description="Helical; Name=I" evidence="1">
    <location>
        <begin position="16"/>
        <end position="34"/>
    </location>
</feature>
<feature type="topological domain" description="Mitochondrial intermembrane" evidence="1">
    <location>
        <begin position="35"/>
        <end position="40"/>
    </location>
</feature>
<feature type="transmembrane region" description="Helical; Name=II" evidence="1">
    <location>
        <begin position="41"/>
        <end position="66"/>
    </location>
</feature>
<feature type="topological domain" description="Mitochondrial matrix" evidence="1">
    <location>
        <begin position="67"/>
        <end position="72"/>
    </location>
</feature>
<feature type="transmembrane region" description="Helical; Name=III" evidence="1">
    <location>
        <begin position="73"/>
        <end position="105"/>
    </location>
</feature>
<feature type="topological domain" description="Mitochondrial intermembrane" evidence="1">
    <location>
        <begin position="106"/>
        <end position="128"/>
    </location>
</feature>
<feature type="transmembrane region" description="Helical; Name=IV" evidence="1">
    <location>
        <begin position="129"/>
        <end position="152"/>
    </location>
</feature>
<feature type="topological domain" description="Mitochondrial matrix" evidence="1">
    <location>
        <begin position="153"/>
        <end position="155"/>
    </location>
</feature>
<feature type="transmembrane region" description="Helical; Name=V" evidence="1">
    <location>
        <begin position="156"/>
        <end position="183"/>
    </location>
</feature>
<feature type="topological domain" description="Mitochondrial intermembrane" evidence="1">
    <location>
        <begin position="184"/>
        <end position="190"/>
    </location>
</feature>
<feature type="transmembrane region" description="Helical; Name=VI" evidence="1">
    <location>
        <begin position="191"/>
        <end position="223"/>
    </location>
</feature>
<feature type="topological domain" description="Mitochondrial matrix" evidence="1">
    <location>
        <begin position="224"/>
        <end position="232"/>
    </location>
</feature>
<feature type="transmembrane region" description="Helical; Name=VII" evidence="1">
    <location>
        <begin position="233"/>
        <end position="256"/>
    </location>
</feature>
<feature type="topological domain" description="Mitochondrial intermembrane" evidence="1">
    <location>
        <begin position="257"/>
        <end position="261"/>
    </location>
</feature>
<dbReference type="EC" id="7.1.1.9"/>
<dbReference type="EMBL" id="AF030275">
    <property type="protein sequence ID" value="AAB92237.1"/>
    <property type="molecule type" value="Genomic_DNA"/>
</dbReference>
<dbReference type="SMR" id="O47686"/>
<dbReference type="GO" id="GO:0005743">
    <property type="term" value="C:mitochondrial inner membrane"/>
    <property type="evidence" value="ECO:0007669"/>
    <property type="project" value="UniProtKB-SubCell"/>
</dbReference>
<dbReference type="GO" id="GO:0045277">
    <property type="term" value="C:respiratory chain complex IV"/>
    <property type="evidence" value="ECO:0000250"/>
    <property type="project" value="UniProtKB"/>
</dbReference>
<dbReference type="GO" id="GO:0004129">
    <property type="term" value="F:cytochrome-c oxidase activity"/>
    <property type="evidence" value="ECO:0007669"/>
    <property type="project" value="UniProtKB-EC"/>
</dbReference>
<dbReference type="GO" id="GO:0006123">
    <property type="term" value="P:mitochondrial electron transport, cytochrome c to oxygen"/>
    <property type="evidence" value="ECO:0007669"/>
    <property type="project" value="TreeGrafter"/>
</dbReference>
<dbReference type="GO" id="GO:0008535">
    <property type="term" value="P:respiratory chain complex IV assembly"/>
    <property type="evidence" value="ECO:0000250"/>
    <property type="project" value="UniProtKB"/>
</dbReference>
<dbReference type="CDD" id="cd01665">
    <property type="entry name" value="Cyt_c_Oxidase_III"/>
    <property type="match status" value="1"/>
</dbReference>
<dbReference type="FunFam" id="1.10.287.70:FF:000048">
    <property type="entry name" value="Cytochrome c oxidase subunit 3"/>
    <property type="match status" value="1"/>
</dbReference>
<dbReference type="FunFam" id="1.20.120.80:FF:000002">
    <property type="entry name" value="Cytochrome c oxidase subunit 3"/>
    <property type="match status" value="1"/>
</dbReference>
<dbReference type="Gene3D" id="1.10.287.70">
    <property type="match status" value="1"/>
</dbReference>
<dbReference type="Gene3D" id="1.20.120.80">
    <property type="entry name" value="Cytochrome c oxidase, subunit III, four-helix bundle"/>
    <property type="match status" value="1"/>
</dbReference>
<dbReference type="InterPro" id="IPR024791">
    <property type="entry name" value="Cyt_c/ubiquinol_Oxase_su3"/>
</dbReference>
<dbReference type="InterPro" id="IPR033945">
    <property type="entry name" value="Cyt_c_oxase_su3_dom"/>
</dbReference>
<dbReference type="InterPro" id="IPR000298">
    <property type="entry name" value="Cyt_c_oxidase-like_su3"/>
</dbReference>
<dbReference type="InterPro" id="IPR035973">
    <property type="entry name" value="Cyt_c_oxidase_su3-like_sf"/>
</dbReference>
<dbReference type="InterPro" id="IPR013833">
    <property type="entry name" value="Cyt_c_oxidase_su3_a-hlx"/>
</dbReference>
<dbReference type="PANTHER" id="PTHR11403:SF7">
    <property type="entry name" value="CYTOCHROME C OXIDASE SUBUNIT 3"/>
    <property type="match status" value="1"/>
</dbReference>
<dbReference type="PANTHER" id="PTHR11403">
    <property type="entry name" value="CYTOCHROME C OXIDASE SUBUNIT III"/>
    <property type="match status" value="1"/>
</dbReference>
<dbReference type="Pfam" id="PF00510">
    <property type="entry name" value="COX3"/>
    <property type="match status" value="1"/>
</dbReference>
<dbReference type="SUPFAM" id="SSF81452">
    <property type="entry name" value="Cytochrome c oxidase subunit III-like"/>
    <property type="match status" value="1"/>
</dbReference>
<dbReference type="PROSITE" id="PS50253">
    <property type="entry name" value="COX3"/>
    <property type="match status" value="1"/>
</dbReference>
<evidence type="ECO:0000250" key="1">
    <source>
        <dbReference type="UniProtKB" id="P00415"/>
    </source>
</evidence>
<evidence type="ECO:0000250" key="2">
    <source>
        <dbReference type="UniProtKB" id="P00420"/>
    </source>
</evidence>
<evidence type="ECO:0000305" key="3"/>
<reference key="1">
    <citation type="journal article" date="1999" name="Mol. Phylogenet. Evol.">
        <title>Phylogenetic relationships in the bovid subfamily Antilopinae based on mitochondrial DNA sequences.</title>
        <authorList>
            <person name="Rebholz W.E.R."/>
            <person name="Harley E.H."/>
        </authorList>
    </citation>
    <scope>NUCLEOTIDE SEQUENCE [GENOMIC DNA]</scope>
</reference>